<sequence>MGEENSTSGTCKPSKTFKAKCSHMVRKQRAKFYILGRCLAMLVCGRGRDRERDRILI</sequence>
<feature type="chain" id="PRO_0000452788" description="Small polypeptide DEVIL 20">
    <location>
        <begin position="1"/>
        <end position="57"/>
    </location>
</feature>
<feature type="transmembrane region" description="Helical" evidence="2">
    <location>
        <begin position="29"/>
        <end position="45"/>
    </location>
</feature>
<feature type="region of interest" description="Required for DVL/RTFL small polypeptide activity" evidence="1">
    <location>
        <begin position="16"/>
        <end position="47"/>
    </location>
</feature>
<feature type="glycosylation site" description="N-linked (GlcNAc...) asparagine" evidence="3">
    <location>
        <position position="5"/>
    </location>
</feature>
<proteinExistence type="inferred from homology"/>
<name>DVL20_ARATH</name>
<dbReference type="EMBL" id="BK001763">
    <property type="protein sequence ID" value="DAA02291.1"/>
    <property type="molecule type" value="mRNA"/>
</dbReference>
<dbReference type="EMBL" id="AL132958">
    <property type="status" value="NOT_ANNOTATED_CDS"/>
    <property type="molecule type" value="Genomic_DNA"/>
</dbReference>
<dbReference type="EMBL" id="CP002686">
    <property type="protein sequence ID" value="AEE79051.1"/>
    <property type="molecule type" value="Genomic_DNA"/>
</dbReference>
<dbReference type="EMBL" id="BT026012">
    <property type="protein sequence ID" value="ABG25101.1"/>
    <property type="molecule type" value="mRNA"/>
</dbReference>
<dbReference type="EMBL" id="AY087313">
    <property type="protein sequence ID" value="AAM64863.1"/>
    <property type="molecule type" value="mRNA"/>
</dbReference>
<dbReference type="RefSeq" id="NP_974421.1">
    <property type="nucleotide sequence ID" value="NM_202692.2"/>
</dbReference>
<dbReference type="STRING" id="3702.Q8LBB5"/>
<dbReference type="GlyCosmos" id="Q8LBB5">
    <property type="glycosylation" value="1 site, No reported glycans"/>
</dbReference>
<dbReference type="GlyGen" id="Q8LBB5">
    <property type="glycosylation" value="1 site"/>
</dbReference>
<dbReference type="PaxDb" id="3702-AT3G53232.1"/>
<dbReference type="EnsemblPlants" id="AT3G53232.1">
    <property type="protein sequence ID" value="AT3G53232.1"/>
    <property type="gene ID" value="AT3G53232"/>
</dbReference>
<dbReference type="GeneID" id="2745963"/>
<dbReference type="Gramene" id="AT3G53232.1">
    <property type="protein sequence ID" value="AT3G53232.1"/>
    <property type="gene ID" value="AT3G53232"/>
</dbReference>
<dbReference type="KEGG" id="ath:AT3G53232"/>
<dbReference type="Araport" id="AT3G53232"/>
<dbReference type="TAIR" id="AT3G53232">
    <property type="gene designation" value="RTFL1"/>
</dbReference>
<dbReference type="HOGENOM" id="CLU_150897_4_2_1"/>
<dbReference type="InParanoid" id="Q8LBB5"/>
<dbReference type="OMA" id="KAKCSHM"/>
<dbReference type="OrthoDB" id="784420at2759"/>
<dbReference type="PhylomeDB" id="Q8LBB5"/>
<dbReference type="PRO" id="PR:Q8LBB5"/>
<dbReference type="Proteomes" id="UP000006548">
    <property type="component" value="Chromosome 3"/>
</dbReference>
<dbReference type="ExpressionAtlas" id="Q8LBB5">
    <property type="expression patterns" value="baseline and differential"/>
</dbReference>
<dbReference type="GO" id="GO:0005886">
    <property type="term" value="C:plasma membrane"/>
    <property type="evidence" value="ECO:0000250"/>
    <property type="project" value="UniProtKB"/>
</dbReference>
<dbReference type="GO" id="GO:0008285">
    <property type="term" value="P:negative regulation of cell population proliferation"/>
    <property type="evidence" value="ECO:0000250"/>
    <property type="project" value="UniProtKB"/>
</dbReference>
<dbReference type="GO" id="GO:0048367">
    <property type="term" value="P:shoot system development"/>
    <property type="evidence" value="ECO:0000250"/>
    <property type="project" value="TAIR"/>
</dbReference>
<dbReference type="InterPro" id="IPR012552">
    <property type="entry name" value="DVL"/>
</dbReference>
<dbReference type="InterPro" id="IPR051525">
    <property type="entry name" value="DVL_RTFL_regulatory"/>
</dbReference>
<dbReference type="PANTHER" id="PTHR33102">
    <property type="entry name" value="DVL19-RELATED-RELATED"/>
    <property type="match status" value="1"/>
</dbReference>
<dbReference type="Pfam" id="PF08137">
    <property type="entry name" value="DVL"/>
    <property type="match status" value="1"/>
</dbReference>
<evidence type="ECO:0000250" key="1">
    <source>
        <dbReference type="UniProtKB" id="Q7XXN8"/>
    </source>
</evidence>
<evidence type="ECO:0000255" key="2"/>
<evidence type="ECO:0000255" key="3">
    <source>
        <dbReference type="PROSITE-ProRule" id="PRU00498"/>
    </source>
</evidence>
<evidence type="ECO:0000269" key="4">
    <source>
    </source>
</evidence>
<evidence type="ECO:0000303" key="5">
    <source>
    </source>
</evidence>
<evidence type="ECO:0000303" key="6">
    <source>
    </source>
</evidence>
<evidence type="ECO:0000305" key="7"/>
<evidence type="ECO:0000312" key="8">
    <source>
        <dbReference type="Araport" id="AT3G53232"/>
    </source>
</evidence>
<evidence type="ECO:0000312" key="9">
    <source>
        <dbReference type="EMBL" id="AL132958"/>
    </source>
</evidence>
<gene>
    <name evidence="5" type="primary">DVL20</name>
    <name evidence="6" type="synonym">RTFL1</name>
    <name evidence="8" type="ordered locus">At3g53232</name>
    <name evidence="9" type="ORF">T4D2</name>
</gene>
<accession>Q8LBB5</accession>
<protein>
    <recommendedName>
        <fullName evidence="5">Small polypeptide DEVIL 20</fullName>
    </recommendedName>
    <alternativeName>
        <fullName evidence="6">Small polypeptide ROTUNDIFOLIA LIKE 1</fullName>
        <shortName evidence="6">Small polypeptide ROT-FOUR-LIKE 1</shortName>
    </alternativeName>
</protein>
<comment type="function">
    <text evidence="4">Small polypeptide acting as a regulatory molecule which coordinates cellular responses required for differentiation, growth and development, probably by restricting polar cell proliferation in lateral organs and coordinating socket cell recruitment and differentiation at trichome sites.</text>
</comment>
<comment type="subcellular location">
    <subcellularLocation>
        <location evidence="1">Cell membrane</location>
        <topology evidence="2">Single-pass membrane protein</topology>
    </subcellularLocation>
</comment>
<comment type="similarity">
    <text evidence="7">Belongs to the DVL/RTFL small polypeptides family.</text>
</comment>
<organism>
    <name type="scientific">Arabidopsis thaliana</name>
    <name type="common">Mouse-ear cress</name>
    <dbReference type="NCBI Taxonomy" id="3702"/>
    <lineage>
        <taxon>Eukaryota</taxon>
        <taxon>Viridiplantae</taxon>
        <taxon>Streptophyta</taxon>
        <taxon>Embryophyta</taxon>
        <taxon>Tracheophyta</taxon>
        <taxon>Spermatophyta</taxon>
        <taxon>Magnoliopsida</taxon>
        <taxon>eudicotyledons</taxon>
        <taxon>Gunneridae</taxon>
        <taxon>Pentapetalae</taxon>
        <taxon>rosids</taxon>
        <taxon>malvids</taxon>
        <taxon>Brassicales</taxon>
        <taxon>Brassicaceae</taxon>
        <taxon>Camelineae</taxon>
        <taxon>Arabidopsis</taxon>
    </lineage>
</organism>
<reference key="1">
    <citation type="journal article" date="2004" name="Plant J.">
        <title>DVL, a novel class of small polypeptides: overexpression alters Arabidopsis development.</title>
        <authorList>
            <person name="Wen J."/>
            <person name="Lease K.A."/>
            <person name="Walker J.C."/>
        </authorList>
    </citation>
    <scope>NUCLEOTIDE SEQUENCE [MRNA]</scope>
    <scope>GENE FAMILY</scope>
    <scope>NOMENCLATURE</scope>
    <source>
        <strain>cv. Columbia</strain>
    </source>
</reference>
<reference key="2">
    <citation type="journal article" date="2000" name="Nature">
        <title>Sequence and analysis of chromosome 3 of the plant Arabidopsis thaliana.</title>
        <authorList>
            <person name="Salanoubat M."/>
            <person name="Lemcke K."/>
            <person name="Rieger M."/>
            <person name="Ansorge W."/>
            <person name="Unseld M."/>
            <person name="Fartmann B."/>
            <person name="Valle G."/>
            <person name="Bloecker H."/>
            <person name="Perez-Alonso M."/>
            <person name="Obermaier B."/>
            <person name="Delseny M."/>
            <person name="Boutry M."/>
            <person name="Grivell L.A."/>
            <person name="Mache R."/>
            <person name="Puigdomenech P."/>
            <person name="De Simone V."/>
            <person name="Choisne N."/>
            <person name="Artiguenave F."/>
            <person name="Robert C."/>
            <person name="Brottier P."/>
            <person name="Wincker P."/>
            <person name="Cattolico L."/>
            <person name="Weissenbach J."/>
            <person name="Saurin W."/>
            <person name="Quetier F."/>
            <person name="Schaefer M."/>
            <person name="Mueller-Auer S."/>
            <person name="Gabel C."/>
            <person name="Fuchs M."/>
            <person name="Benes V."/>
            <person name="Wurmbach E."/>
            <person name="Drzonek H."/>
            <person name="Erfle H."/>
            <person name="Jordan N."/>
            <person name="Bangert S."/>
            <person name="Wiedelmann R."/>
            <person name="Kranz H."/>
            <person name="Voss H."/>
            <person name="Holland R."/>
            <person name="Brandt P."/>
            <person name="Nyakatura G."/>
            <person name="Vezzi A."/>
            <person name="D'Angelo M."/>
            <person name="Pallavicini A."/>
            <person name="Toppo S."/>
            <person name="Simionati B."/>
            <person name="Conrad A."/>
            <person name="Hornischer K."/>
            <person name="Kauer G."/>
            <person name="Loehnert T.-H."/>
            <person name="Nordsiek G."/>
            <person name="Reichelt J."/>
            <person name="Scharfe M."/>
            <person name="Schoen O."/>
            <person name="Bargues M."/>
            <person name="Terol J."/>
            <person name="Climent J."/>
            <person name="Navarro P."/>
            <person name="Collado C."/>
            <person name="Perez-Perez A."/>
            <person name="Ottenwaelder B."/>
            <person name="Duchemin D."/>
            <person name="Cooke R."/>
            <person name="Laudie M."/>
            <person name="Berger-Llauro C."/>
            <person name="Purnelle B."/>
            <person name="Masuy D."/>
            <person name="de Haan M."/>
            <person name="Maarse A.C."/>
            <person name="Alcaraz J.-P."/>
            <person name="Cottet A."/>
            <person name="Casacuberta E."/>
            <person name="Monfort A."/>
            <person name="Argiriou A."/>
            <person name="Flores M."/>
            <person name="Liguori R."/>
            <person name="Vitale D."/>
            <person name="Mannhaupt G."/>
            <person name="Haase D."/>
            <person name="Schoof H."/>
            <person name="Rudd S."/>
            <person name="Zaccaria P."/>
            <person name="Mewes H.-W."/>
            <person name="Mayer K.F.X."/>
            <person name="Kaul S."/>
            <person name="Town C.D."/>
            <person name="Koo H.L."/>
            <person name="Tallon L.J."/>
            <person name="Jenkins J."/>
            <person name="Rooney T."/>
            <person name="Rizzo M."/>
            <person name="Walts A."/>
            <person name="Utterback T."/>
            <person name="Fujii C.Y."/>
            <person name="Shea T.P."/>
            <person name="Creasy T.H."/>
            <person name="Haas B."/>
            <person name="Maiti R."/>
            <person name="Wu D."/>
            <person name="Peterson J."/>
            <person name="Van Aken S."/>
            <person name="Pai G."/>
            <person name="Militscher J."/>
            <person name="Sellers P."/>
            <person name="Gill J.E."/>
            <person name="Feldblyum T.V."/>
            <person name="Preuss D."/>
            <person name="Lin X."/>
            <person name="Nierman W.C."/>
            <person name="Salzberg S.L."/>
            <person name="White O."/>
            <person name="Venter J.C."/>
            <person name="Fraser C.M."/>
            <person name="Kaneko T."/>
            <person name="Nakamura Y."/>
            <person name="Sato S."/>
            <person name="Kato T."/>
            <person name="Asamizu E."/>
            <person name="Sasamoto S."/>
            <person name="Kimura T."/>
            <person name="Idesawa K."/>
            <person name="Kawashima K."/>
            <person name="Kishida Y."/>
            <person name="Kiyokawa C."/>
            <person name="Kohara M."/>
            <person name="Matsumoto M."/>
            <person name="Matsuno A."/>
            <person name="Muraki A."/>
            <person name="Nakayama S."/>
            <person name="Nakazaki N."/>
            <person name="Shinpo S."/>
            <person name="Takeuchi C."/>
            <person name="Wada T."/>
            <person name="Watanabe A."/>
            <person name="Yamada M."/>
            <person name="Yasuda M."/>
            <person name="Tabata S."/>
        </authorList>
    </citation>
    <scope>NUCLEOTIDE SEQUENCE [LARGE SCALE GENOMIC DNA]</scope>
    <source>
        <strain>cv. Columbia</strain>
    </source>
</reference>
<reference key="3">
    <citation type="journal article" date="2017" name="Plant J.">
        <title>Araport11: a complete reannotation of the Arabidopsis thaliana reference genome.</title>
        <authorList>
            <person name="Cheng C.Y."/>
            <person name="Krishnakumar V."/>
            <person name="Chan A.P."/>
            <person name="Thibaud-Nissen F."/>
            <person name="Schobel S."/>
            <person name="Town C.D."/>
        </authorList>
    </citation>
    <scope>GENOME REANNOTATION</scope>
    <source>
        <strain>cv. Columbia</strain>
    </source>
</reference>
<reference key="4">
    <citation type="submission" date="2006-06" db="EMBL/GenBank/DDBJ databases">
        <title>Arabidopsis ORF clones.</title>
        <authorList>
            <person name="Quinitio C."/>
            <person name="Chen H."/>
            <person name="Kim C.J."/>
            <person name="Shinn P."/>
            <person name="Ecker J.R."/>
        </authorList>
    </citation>
    <scope>NUCLEOTIDE SEQUENCE [LARGE SCALE MRNA]</scope>
    <source>
        <strain>cv. Columbia</strain>
    </source>
</reference>
<reference key="5">
    <citation type="submission" date="2002-03" db="EMBL/GenBank/DDBJ databases">
        <title>Full-length cDNA from Arabidopsis thaliana.</title>
        <authorList>
            <person name="Brover V.V."/>
            <person name="Troukhan M.E."/>
            <person name="Alexandrov N.A."/>
            <person name="Lu Y.-P."/>
            <person name="Flavell R.B."/>
            <person name="Feldmann K.A."/>
        </authorList>
    </citation>
    <scope>NUCLEOTIDE SEQUENCE [LARGE SCALE MRNA]</scope>
</reference>
<reference key="6">
    <citation type="journal article" date="2004" name="Plant J.">
        <title>Overexpression of a novel small peptide ROTUNDIFOLIA4 decreases cell proliferation and alters leaf shape in Arabidopsis thaliana.</title>
        <authorList>
            <person name="Narita N.N."/>
            <person name="Moore S."/>
            <person name="Horiguchi G."/>
            <person name="Kubo M."/>
            <person name="Demura T."/>
            <person name="Fukuda H."/>
            <person name="Goodrich J."/>
            <person name="Tsukaya H."/>
        </authorList>
    </citation>
    <scope>GENE FAMILY</scope>
    <source>
        <strain>cv. Columbia</strain>
        <strain>cv. Landsberg erecta</strain>
    </source>
</reference>
<reference key="7">
    <citation type="journal article" date="2012" name="J. Exp. Bot.">
        <title>DVL genes play a role in the coordination of socket cell recruitment and differentiation.</title>
        <authorList>
            <person name="Valdivia E.R."/>
            <person name="Chevalier D."/>
            <person name="Sampedro J."/>
            <person name="Taylor I."/>
            <person name="Niederhuth C.E."/>
            <person name="Walker J.C."/>
        </authorList>
    </citation>
    <scope>FUNCTION</scope>
    <source>
        <strain>cv. Columbia</strain>
    </source>
</reference>
<reference key="8">
    <citation type="journal article" date="2015" name="J. Plant Res.">
        <title>Comparative analysis of the RTFL peptide family on the control of plant organogenesis.</title>
        <authorList>
            <person name="Guo P."/>
            <person name="Yoshimura A."/>
            <person name="Ishikawa N."/>
            <person name="Yamaguchi T."/>
            <person name="Guo Y."/>
            <person name="Tsukaya H."/>
        </authorList>
    </citation>
    <scope>REVIEW</scope>
    <scope>GENE FAMILY</scope>
    <scope>NOMENCLATURE</scope>
    <source>
        <strain>cv. Columbia</strain>
    </source>
</reference>
<keyword id="KW-1003">Cell membrane</keyword>
<keyword id="KW-0217">Developmental protein</keyword>
<keyword id="KW-0325">Glycoprotein</keyword>
<keyword id="KW-0472">Membrane</keyword>
<keyword id="KW-1185">Reference proteome</keyword>
<keyword id="KW-0812">Transmembrane</keyword>
<keyword id="KW-1133">Transmembrane helix</keyword>